<gene>
    <name evidence="11" type="primary">zdhhc1</name>
    <name evidence="10" type="synonym">dhhc1</name>
</gene>
<accession>E7F4Z4</accession>
<comment type="function">
    <text evidence="3">Palmitoyltransferase that catalyzes the addition of palmitate onto various protein substrates, such as ncdn and nlrp3.</text>
</comment>
<comment type="catalytic activity">
    <reaction evidence="2">
        <text>L-cysteinyl-[protein] + hexadecanoyl-CoA = S-hexadecanoyl-L-cysteinyl-[protein] + CoA</text>
        <dbReference type="Rhea" id="RHEA:36683"/>
        <dbReference type="Rhea" id="RHEA-COMP:10131"/>
        <dbReference type="Rhea" id="RHEA-COMP:11032"/>
        <dbReference type="ChEBI" id="CHEBI:29950"/>
        <dbReference type="ChEBI" id="CHEBI:57287"/>
        <dbReference type="ChEBI" id="CHEBI:57379"/>
        <dbReference type="ChEBI" id="CHEBI:74151"/>
        <dbReference type="EC" id="2.3.1.225"/>
    </reaction>
    <physiologicalReaction direction="left-to-right" evidence="2">
        <dbReference type="Rhea" id="RHEA:36684"/>
    </physiologicalReaction>
</comment>
<comment type="subcellular location">
    <subcellularLocation>
        <location evidence="2">Endosome membrane</location>
        <topology evidence="4">Multi-pass membrane protein</topology>
    </subcellularLocation>
    <subcellularLocation>
        <location evidence="3">Endoplasmic reticulum membrane</location>
        <topology evidence="4">Multi-pass membrane protein</topology>
    </subcellularLocation>
    <subcellularLocation>
        <location evidence="3">Golgi apparatus</location>
    </subcellularLocation>
</comment>
<comment type="developmental stage">
    <text evidence="8 9">Probably maternally supplied, the zygotic expression is detected early during development at the 512-cell stage.</text>
</comment>
<comment type="domain">
    <text evidence="1">The DHHC domain is required for palmitoyltransferase activity.</text>
</comment>
<comment type="similarity">
    <text evidence="6">Belongs to the DHHC palmitoyltransferase family.</text>
</comment>
<organism>
    <name type="scientific">Danio rerio</name>
    <name type="common">Zebrafish</name>
    <name type="synonym">Brachydanio rerio</name>
    <dbReference type="NCBI Taxonomy" id="7955"/>
    <lineage>
        <taxon>Eukaryota</taxon>
        <taxon>Metazoa</taxon>
        <taxon>Chordata</taxon>
        <taxon>Craniata</taxon>
        <taxon>Vertebrata</taxon>
        <taxon>Euteleostomi</taxon>
        <taxon>Actinopterygii</taxon>
        <taxon>Neopterygii</taxon>
        <taxon>Teleostei</taxon>
        <taxon>Ostariophysi</taxon>
        <taxon>Cypriniformes</taxon>
        <taxon>Danionidae</taxon>
        <taxon>Danioninae</taxon>
        <taxon>Danio</taxon>
    </lineage>
</organism>
<dbReference type="EC" id="2.3.1.225" evidence="3"/>
<dbReference type="EMBL" id="CR381641">
    <property type="status" value="NOT_ANNOTATED_CDS"/>
    <property type="molecule type" value="Genomic_DNA"/>
</dbReference>
<dbReference type="RefSeq" id="NP_001410714.1">
    <property type="nucleotide sequence ID" value="NM_001423785.1"/>
</dbReference>
<dbReference type="RefSeq" id="XP_691086.3">
    <property type="nucleotide sequence ID" value="XM_685994.8"/>
</dbReference>
<dbReference type="FunCoup" id="E7F4Z4">
    <property type="interactions" value="166"/>
</dbReference>
<dbReference type="STRING" id="7955.ENSDARP00000102433"/>
<dbReference type="PaxDb" id="7955-ENSDARP00000102433"/>
<dbReference type="Ensembl" id="ENSDART00000110552">
    <property type="protein sequence ID" value="ENSDARP00000102433"/>
    <property type="gene ID" value="ENSDARG00000077546"/>
</dbReference>
<dbReference type="Ensembl" id="ENSDART00000189002">
    <property type="protein sequence ID" value="ENSDARP00000146569"/>
    <property type="gene ID" value="ENSDARG00000077546"/>
</dbReference>
<dbReference type="GeneID" id="562614"/>
<dbReference type="AGR" id="ZFIN:ZDB-GENE-130925-1"/>
<dbReference type="ZFIN" id="ZDB-GENE-130925-1">
    <property type="gene designation" value="zdhhc1"/>
</dbReference>
<dbReference type="eggNOG" id="KOG1311">
    <property type="taxonomic scope" value="Eukaryota"/>
</dbReference>
<dbReference type="HOGENOM" id="CLU_020283_0_1_1"/>
<dbReference type="InParanoid" id="E7F4Z4"/>
<dbReference type="OMA" id="FCFHIYL"/>
<dbReference type="OrthoDB" id="9909019at2759"/>
<dbReference type="TreeFam" id="TF317498"/>
<dbReference type="PRO" id="PR:E7F4Z4"/>
<dbReference type="Proteomes" id="UP000000437">
    <property type="component" value="Chromosome 7"/>
</dbReference>
<dbReference type="Bgee" id="ENSDARG00000077546">
    <property type="expression patterns" value="Expressed in mature ovarian follicle and 21 other cell types or tissues"/>
</dbReference>
<dbReference type="GO" id="GO:0005783">
    <property type="term" value="C:endoplasmic reticulum"/>
    <property type="evidence" value="ECO:0000318"/>
    <property type="project" value="GO_Central"/>
</dbReference>
<dbReference type="GO" id="GO:0005789">
    <property type="term" value="C:endoplasmic reticulum membrane"/>
    <property type="evidence" value="ECO:0007669"/>
    <property type="project" value="UniProtKB-SubCell"/>
</dbReference>
<dbReference type="GO" id="GO:0010008">
    <property type="term" value="C:endosome membrane"/>
    <property type="evidence" value="ECO:0007669"/>
    <property type="project" value="UniProtKB-SubCell"/>
</dbReference>
<dbReference type="GO" id="GO:0005794">
    <property type="term" value="C:Golgi apparatus"/>
    <property type="evidence" value="ECO:0000318"/>
    <property type="project" value="GO_Central"/>
</dbReference>
<dbReference type="GO" id="GO:0019706">
    <property type="term" value="F:protein-cysteine S-palmitoyltransferase activity"/>
    <property type="evidence" value="ECO:0000250"/>
    <property type="project" value="UniProtKB"/>
</dbReference>
<dbReference type="GO" id="GO:0140374">
    <property type="term" value="P:antiviral innate immune response"/>
    <property type="evidence" value="ECO:0000318"/>
    <property type="project" value="GO_Central"/>
</dbReference>
<dbReference type="GO" id="GO:1900227">
    <property type="term" value="P:positive regulation of NLRP3 inflammasome complex assembly"/>
    <property type="evidence" value="ECO:0000250"/>
    <property type="project" value="UniProtKB"/>
</dbReference>
<dbReference type="GO" id="GO:0006612">
    <property type="term" value="P:protein targeting to membrane"/>
    <property type="evidence" value="ECO:0000318"/>
    <property type="project" value="GO_Central"/>
</dbReference>
<dbReference type="InterPro" id="IPR001594">
    <property type="entry name" value="Palmitoyltrfase_DHHC"/>
</dbReference>
<dbReference type="InterPro" id="IPR039859">
    <property type="entry name" value="PFA4/ZDH16/20/ERF2-like"/>
</dbReference>
<dbReference type="PANTHER" id="PTHR22883:SF8">
    <property type="entry name" value="PALMITOYLTRANSFERASE ZDHHC1"/>
    <property type="match status" value="1"/>
</dbReference>
<dbReference type="PANTHER" id="PTHR22883">
    <property type="entry name" value="ZINC FINGER DHHC DOMAIN CONTAINING PROTEIN"/>
    <property type="match status" value="1"/>
</dbReference>
<dbReference type="Pfam" id="PF01529">
    <property type="entry name" value="DHHC"/>
    <property type="match status" value="1"/>
</dbReference>
<dbReference type="PROSITE" id="PS50216">
    <property type="entry name" value="DHHC"/>
    <property type="match status" value="1"/>
</dbReference>
<proteinExistence type="evidence at transcript level"/>
<protein>
    <recommendedName>
        <fullName evidence="12">Palmitoyltransferase ZDHHC1</fullName>
        <ecNumber evidence="3">2.3.1.225</ecNumber>
    </recommendedName>
    <alternativeName>
        <fullName evidence="10">DHHC domain-containing protein 1</fullName>
    </alternativeName>
    <alternativeName>
        <fullName evidence="13">Zinc finger DHHC domain-containing protein 1</fullName>
    </alternativeName>
</protein>
<sequence length="578" mass="63372">MDVCSKNSNRTAPVSEGGIRRADVPLCSRTNGWSWPPHPFQFLAWLLYLYFAVTGFGVFVPLLPTHWIPAGYICTGITFVCHLFMHLMAVSIDPADYNVRAKSYKGPMPVFDRTKHAHVIENCHCYLCEVDVGPKSKHCSACNKCVASFDHHCRWLNNCVGSRNYWLFLNSVISALLGIVLVVVIASYVFIEFFLDPSKLRSDKHFQQVRNESVVWFVFLPVAPVTTAGPAIPALAGVTIALGLLSALLLGHLLCFHIYLMWNRLSTYEYIVRQRHRQEAGDSRKPPPENDSGVPKLNLIKQQVSYSGTLGYTNPEMEVEDPKAMTSQEGAARYGNGRIRCSSEHMDEEEHLPSVLTEQKASPHPHKHAQKKKRKVRKLAAEVNGDISIDTSTAKGLQKTSAEKESSVAAATVSSSLGQRLPFPAFPLRASLPPLAPVQAAGPPAEYHSDSAESLEEIPVAMARLGSAALAGAQIPTTTATASSSYSSMLQCALPSSAAGHAAPSPQPRTKRKTAARTVSEQRFEMLYHNPSMFMTRESGEPAIPPEESPRAAKRKQTGKKRNTEDAKPSSRVGTSLA</sequence>
<keyword id="KW-0012">Acyltransferase</keyword>
<keyword id="KW-0256">Endoplasmic reticulum</keyword>
<keyword id="KW-0967">Endosome</keyword>
<keyword id="KW-0333">Golgi apparatus</keyword>
<keyword id="KW-0449">Lipoprotein</keyword>
<keyword id="KW-0472">Membrane</keyword>
<keyword id="KW-0564">Palmitate</keyword>
<keyword id="KW-1185">Reference proteome</keyword>
<keyword id="KW-0808">Transferase</keyword>
<keyword id="KW-0812">Transmembrane</keyword>
<keyword id="KW-1133">Transmembrane helix</keyword>
<name>ZDHC1_DANRE</name>
<evidence type="ECO:0000250" key="1">
    <source>
        <dbReference type="UniProtKB" id="Q8IUH5"/>
    </source>
</evidence>
<evidence type="ECO:0000250" key="2">
    <source>
        <dbReference type="UniProtKB" id="Q8R0N9"/>
    </source>
</evidence>
<evidence type="ECO:0000250" key="3">
    <source>
        <dbReference type="UniProtKB" id="Q8WTX9"/>
    </source>
</evidence>
<evidence type="ECO:0000255" key="4"/>
<evidence type="ECO:0000255" key="5">
    <source>
        <dbReference type="PROSITE-ProRule" id="PRU00067"/>
    </source>
</evidence>
<evidence type="ECO:0000255" key="6">
    <source>
        <dbReference type="RuleBase" id="RU079119"/>
    </source>
</evidence>
<evidence type="ECO:0000256" key="7">
    <source>
        <dbReference type="SAM" id="MobiDB-lite"/>
    </source>
</evidence>
<evidence type="ECO:0000269" key="8">
    <source>
    </source>
</evidence>
<evidence type="ECO:0000269" key="9">
    <source>
    </source>
</evidence>
<evidence type="ECO:0000303" key="10">
    <source>
    </source>
</evidence>
<evidence type="ECO:0000303" key="11">
    <source>
    </source>
</evidence>
<evidence type="ECO:0000305" key="12"/>
<evidence type="ECO:0000305" key="13">
    <source>
    </source>
</evidence>
<feature type="chain" id="PRO_0000449457" description="Palmitoyltransferase ZDHHC1">
    <location>
        <begin position="1"/>
        <end position="578"/>
    </location>
</feature>
<feature type="topological domain" description="Cytoplasmic" evidence="12">
    <location>
        <begin position="1"/>
        <end position="41"/>
    </location>
</feature>
<feature type="transmembrane region" description="Helical" evidence="4">
    <location>
        <begin position="42"/>
        <end position="62"/>
    </location>
</feature>
<feature type="topological domain" description="Lumenal" evidence="12">
    <location>
        <begin position="63"/>
        <end position="71"/>
    </location>
</feature>
<feature type="transmembrane region" description="Helical" evidence="4">
    <location>
        <begin position="72"/>
        <end position="92"/>
    </location>
</feature>
<feature type="topological domain" description="Cytoplasmic" evidence="12">
    <location>
        <begin position="93"/>
        <end position="174"/>
    </location>
</feature>
<feature type="transmembrane region" description="Helical" evidence="4">
    <location>
        <begin position="175"/>
        <end position="195"/>
    </location>
</feature>
<feature type="topological domain" description="Lumenal" evidence="12">
    <location>
        <begin position="196"/>
        <end position="230"/>
    </location>
</feature>
<feature type="transmembrane region" description="Helical" evidence="4">
    <location>
        <begin position="231"/>
        <end position="251"/>
    </location>
</feature>
<feature type="topological domain" description="Cytoplasmic" evidence="12">
    <location>
        <begin position="252"/>
        <end position="578"/>
    </location>
</feature>
<feature type="domain" description="DHHC" evidence="5">
    <location>
        <begin position="121"/>
        <end position="173"/>
    </location>
</feature>
<feature type="region of interest" description="Disordered" evidence="7">
    <location>
        <begin position="278"/>
        <end position="298"/>
    </location>
</feature>
<feature type="region of interest" description="Disordered" evidence="7">
    <location>
        <begin position="345"/>
        <end position="376"/>
    </location>
</feature>
<feature type="region of interest" description="Disordered" evidence="7">
    <location>
        <begin position="497"/>
        <end position="517"/>
    </location>
</feature>
<feature type="region of interest" description="Disordered" evidence="7">
    <location>
        <begin position="532"/>
        <end position="578"/>
    </location>
</feature>
<feature type="compositionally biased region" description="Basic and acidic residues" evidence="7">
    <location>
        <begin position="278"/>
        <end position="288"/>
    </location>
</feature>
<feature type="compositionally biased region" description="Basic residues" evidence="7">
    <location>
        <begin position="363"/>
        <end position="376"/>
    </location>
</feature>
<feature type="compositionally biased region" description="Basic residues" evidence="7">
    <location>
        <begin position="552"/>
        <end position="561"/>
    </location>
</feature>
<feature type="active site" description="S-palmitoyl cysteine intermediate" evidence="5">
    <location>
        <position position="153"/>
    </location>
</feature>
<reference key="1">
    <citation type="journal article" date="2013" name="Nature">
        <title>The zebrafish reference genome sequence and its relationship to the human genome.</title>
        <authorList>
            <person name="Howe K."/>
            <person name="Clark M.D."/>
            <person name="Torroja C.F."/>
            <person name="Torrance J."/>
            <person name="Berthelot C."/>
            <person name="Muffato M."/>
            <person name="Collins J.E."/>
            <person name="Humphray S."/>
            <person name="McLaren K."/>
            <person name="Matthews L."/>
            <person name="McLaren S."/>
            <person name="Sealy I."/>
            <person name="Caccamo M."/>
            <person name="Churcher C."/>
            <person name="Scott C."/>
            <person name="Barrett J.C."/>
            <person name="Koch R."/>
            <person name="Rauch G.J."/>
            <person name="White S."/>
            <person name="Chow W."/>
            <person name="Kilian B."/>
            <person name="Quintais L.T."/>
            <person name="Guerra-Assuncao J.A."/>
            <person name="Zhou Y."/>
            <person name="Gu Y."/>
            <person name="Yen J."/>
            <person name="Vogel J.H."/>
            <person name="Eyre T."/>
            <person name="Redmond S."/>
            <person name="Banerjee R."/>
            <person name="Chi J."/>
            <person name="Fu B."/>
            <person name="Langley E."/>
            <person name="Maguire S.F."/>
            <person name="Laird G.K."/>
            <person name="Lloyd D."/>
            <person name="Kenyon E."/>
            <person name="Donaldson S."/>
            <person name="Sehra H."/>
            <person name="Almeida-King J."/>
            <person name="Loveland J."/>
            <person name="Trevanion S."/>
            <person name="Jones M."/>
            <person name="Quail M."/>
            <person name="Willey D."/>
            <person name="Hunt A."/>
            <person name="Burton J."/>
            <person name="Sims S."/>
            <person name="McLay K."/>
            <person name="Plumb B."/>
            <person name="Davis J."/>
            <person name="Clee C."/>
            <person name="Oliver K."/>
            <person name="Clark R."/>
            <person name="Riddle C."/>
            <person name="Elliot D."/>
            <person name="Threadgold G."/>
            <person name="Harden G."/>
            <person name="Ware D."/>
            <person name="Begum S."/>
            <person name="Mortimore B."/>
            <person name="Kerry G."/>
            <person name="Heath P."/>
            <person name="Phillimore B."/>
            <person name="Tracey A."/>
            <person name="Corby N."/>
            <person name="Dunn M."/>
            <person name="Johnson C."/>
            <person name="Wood J."/>
            <person name="Clark S."/>
            <person name="Pelan S."/>
            <person name="Griffiths G."/>
            <person name="Smith M."/>
            <person name="Glithero R."/>
            <person name="Howden P."/>
            <person name="Barker N."/>
            <person name="Lloyd C."/>
            <person name="Stevens C."/>
            <person name="Harley J."/>
            <person name="Holt K."/>
            <person name="Panagiotidis G."/>
            <person name="Lovell J."/>
            <person name="Beasley H."/>
            <person name="Henderson C."/>
            <person name="Gordon D."/>
            <person name="Auger K."/>
            <person name="Wright D."/>
            <person name="Collins J."/>
            <person name="Raisen C."/>
            <person name="Dyer L."/>
            <person name="Leung K."/>
            <person name="Robertson L."/>
            <person name="Ambridge K."/>
            <person name="Leongamornlert D."/>
            <person name="McGuire S."/>
            <person name="Gilderthorp R."/>
            <person name="Griffiths C."/>
            <person name="Manthravadi D."/>
            <person name="Nichol S."/>
            <person name="Barker G."/>
            <person name="Whitehead S."/>
            <person name="Kay M."/>
            <person name="Brown J."/>
            <person name="Murnane C."/>
            <person name="Gray E."/>
            <person name="Humphries M."/>
            <person name="Sycamore N."/>
            <person name="Barker D."/>
            <person name="Saunders D."/>
            <person name="Wallis J."/>
            <person name="Babbage A."/>
            <person name="Hammond S."/>
            <person name="Mashreghi-Mohammadi M."/>
            <person name="Barr L."/>
            <person name="Martin S."/>
            <person name="Wray P."/>
            <person name="Ellington A."/>
            <person name="Matthews N."/>
            <person name="Ellwood M."/>
            <person name="Woodmansey R."/>
            <person name="Clark G."/>
            <person name="Cooper J."/>
            <person name="Tromans A."/>
            <person name="Grafham D."/>
            <person name="Skuce C."/>
            <person name="Pandian R."/>
            <person name="Andrews R."/>
            <person name="Harrison E."/>
            <person name="Kimberley A."/>
            <person name="Garnett J."/>
            <person name="Fosker N."/>
            <person name="Hall R."/>
            <person name="Garner P."/>
            <person name="Kelly D."/>
            <person name="Bird C."/>
            <person name="Palmer S."/>
            <person name="Gehring I."/>
            <person name="Berger A."/>
            <person name="Dooley C.M."/>
            <person name="Ersan-Urun Z."/>
            <person name="Eser C."/>
            <person name="Geiger H."/>
            <person name="Geisler M."/>
            <person name="Karotki L."/>
            <person name="Kirn A."/>
            <person name="Konantz J."/>
            <person name="Konantz M."/>
            <person name="Oberlander M."/>
            <person name="Rudolph-Geiger S."/>
            <person name="Teucke M."/>
            <person name="Lanz C."/>
            <person name="Raddatz G."/>
            <person name="Osoegawa K."/>
            <person name="Zhu B."/>
            <person name="Rapp A."/>
            <person name="Widaa S."/>
            <person name="Langford C."/>
            <person name="Yang F."/>
            <person name="Schuster S.C."/>
            <person name="Carter N.P."/>
            <person name="Harrow J."/>
            <person name="Ning Z."/>
            <person name="Herrero J."/>
            <person name="Searle S.M."/>
            <person name="Enright A."/>
            <person name="Geisler R."/>
            <person name="Plasterk R.H."/>
            <person name="Lee C."/>
            <person name="Westerfield M."/>
            <person name="de Jong P.J."/>
            <person name="Zon L.I."/>
            <person name="Postlethwait J.H."/>
            <person name="Nusslein-Volhard C."/>
            <person name="Hubbard T.J."/>
            <person name="Roest Crollius H."/>
            <person name="Rogers J."/>
            <person name="Stemple D.L."/>
        </authorList>
    </citation>
    <scope>NUCLEOTIDE SEQUENCE [LARGE SCALE GENOMIC DNA]</scope>
    <source>
        <strain>Tuebingen</strain>
    </source>
</reference>
<reference key="2">
    <citation type="journal article" date="2015" name="Neurotoxicol. Teratol.">
        <title>2-Bromopalmitate impairs neural stem/progenitor cell proliferation, promotes cell apoptosis and induces malformation in zebrafish embryonic brain.</title>
        <authorList>
            <person name="Wang C."/>
            <person name="Chen X."/>
            <person name="Shi W."/>
            <person name="Wang F."/>
            <person name="Du Z."/>
            <person name="Li X."/>
            <person name="Yao Y."/>
            <person name="Liu T."/>
            <person name="Shao T."/>
            <person name="Li G."/>
            <person name="Hao A."/>
        </authorList>
    </citation>
    <scope>DEVELOPMENTAL STAGE</scope>
</reference>
<reference key="3">
    <citation type="journal article" date="2016" name="Biochem. Biophys. Res. Commun.">
        <title>Protein palmitoylation activate zygotic gene expression during the maternal-to-zygotic transition.</title>
        <authorList>
            <person name="Du Z."/>
            <person name="Chen X."/>
            <person name="Li X."/>
            <person name="He K."/>
            <person name="Ji S."/>
            <person name="Shi W."/>
            <person name="Hao A."/>
        </authorList>
    </citation>
    <scope>DEVELOPMENTAL STAGE</scope>
</reference>